<evidence type="ECO:0000255" key="1">
    <source>
        <dbReference type="HAMAP-Rule" id="MF_01576"/>
    </source>
</evidence>
<protein>
    <recommendedName>
        <fullName evidence="1">Bifunctional protein FolD 1</fullName>
    </recommendedName>
    <domain>
        <recommendedName>
            <fullName evidence="1">Methylenetetrahydrofolate dehydrogenase</fullName>
            <ecNumber evidence="1">1.5.1.5</ecNumber>
        </recommendedName>
    </domain>
    <domain>
        <recommendedName>
            <fullName evidence="1">Methenyltetrahydrofolate cyclohydrolase</fullName>
            <ecNumber evidence="1">3.5.4.9</ecNumber>
        </recommendedName>
    </domain>
</protein>
<name>FOLD1_PSEU2</name>
<comment type="function">
    <text evidence="1">Catalyzes the oxidation of 5,10-methylenetetrahydrofolate to 5,10-methenyltetrahydrofolate and then the hydrolysis of 5,10-methenyltetrahydrofolate to 10-formyltetrahydrofolate.</text>
</comment>
<comment type="catalytic activity">
    <reaction evidence="1">
        <text>(6R)-5,10-methylene-5,6,7,8-tetrahydrofolate + NADP(+) = (6R)-5,10-methenyltetrahydrofolate + NADPH</text>
        <dbReference type="Rhea" id="RHEA:22812"/>
        <dbReference type="ChEBI" id="CHEBI:15636"/>
        <dbReference type="ChEBI" id="CHEBI:57455"/>
        <dbReference type="ChEBI" id="CHEBI:57783"/>
        <dbReference type="ChEBI" id="CHEBI:58349"/>
        <dbReference type="EC" id="1.5.1.5"/>
    </reaction>
</comment>
<comment type="catalytic activity">
    <reaction evidence="1">
        <text>(6R)-5,10-methenyltetrahydrofolate + H2O = (6R)-10-formyltetrahydrofolate + H(+)</text>
        <dbReference type="Rhea" id="RHEA:23700"/>
        <dbReference type="ChEBI" id="CHEBI:15377"/>
        <dbReference type="ChEBI" id="CHEBI:15378"/>
        <dbReference type="ChEBI" id="CHEBI:57455"/>
        <dbReference type="ChEBI" id="CHEBI:195366"/>
        <dbReference type="EC" id="3.5.4.9"/>
    </reaction>
</comment>
<comment type="pathway">
    <text evidence="1">One-carbon metabolism; tetrahydrofolate interconversion.</text>
</comment>
<comment type="subunit">
    <text evidence="1">Homodimer.</text>
</comment>
<comment type="similarity">
    <text evidence="1">Belongs to the tetrahydrofolate dehydrogenase/cyclohydrolase family.</text>
</comment>
<proteinExistence type="inferred from homology"/>
<reference key="1">
    <citation type="journal article" date="2005" name="Proc. Natl. Acad. Sci. U.S.A.">
        <title>Comparison of the complete genome sequences of Pseudomonas syringae pv. syringae B728a and pv. tomato DC3000.</title>
        <authorList>
            <person name="Feil H."/>
            <person name="Feil W.S."/>
            <person name="Chain P."/>
            <person name="Larimer F."/>
            <person name="Dibartolo G."/>
            <person name="Copeland A."/>
            <person name="Lykidis A."/>
            <person name="Trong S."/>
            <person name="Nolan M."/>
            <person name="Goltsman E."/>
            <person name="Thiel J."/>
            <person name="Malfatti S."/>
            <person name="Loper J.E."/>
            <person name="Lapidus A."/>
            <person name="Detter J.C."/>
            <person name="Land M."/>
            <person name="Richardson P.M."/>
            <person name="Kyrpides N.C."/>
            <person name="Ivanova N."/>
            <person name="Lindow S.E."/>
        </authorList>
    </citation>
    <scope>NUCLEOTIDE SEQUENCE [LARGE SCALE GENOMIC DNA]</scope>
    <source>
        <strain>B728a</strain>
    </source>
</reference>
<gene>
    <name evidence="1" type="primary">folD1</name>
    <name type="ordered locus">Psyr_1743</name>
</gene>
<sequence length="284" mass="30285">MTAKLIDGKAIAASLRQQIAKRVAERSQQGLRTPGLAVILVGSDPASQVYVSHKRKDCEEVGFISQAYDLPADTTQAALTDLIDRLNEDAAVDGVLLQLPLPAHLDASLLLERIRPDKDVDGFHPYNVGRLAQRIPLLRPCTPKGIMTLLESTGVDLYGLDAVVVGASNIVGRPMAMELLLAGCTVTVTHRFTRDLAGHVGRADLVVVAAGKPGLVKGEWIKPGAIVIDVGINRQEDGKLVGDVVYETALPRAGWITPVPGGVGPMTRACLLENTLYAAETLHD</sequence>
<keyword id="KW-0028">Amino-acid biosynthesis</keyword>
<keyword id="KW-0368">Histidine biosynthesis</keyword>
<keyword id="KW-0378">Hydrolase</keyword>
<keyword id="KW-0486">Methionine biosynthesis</keyword>
<keyword id="KW-0511">Multifunctional enzyme</keyword>
<keyword id="KW-0521">NADP</keyword>
<keyword id="KW-0554">One-carbon metabolism</keyword>
<keyword id="KW-0560">Oxidoreductase</keyword>
<keyword id="KW-0658">Purine biosynthesis</keyword>
<dbReference type="EC" id="1.5.1.5" evidence="1"/>
<dbReference type="EC" id="3.5.4.9" evidence="1"/>
<dbReference type="EMBL" id="CP000075">
    <property type="protein sequence ID" value="AAY36791.1"/>
    <property type="molecule type" value="Genomic_DNA"/>
</dbReference>
<dbReference type="RefSeq" id="YP_234829.1">
    <property type="nucleotide sequence ID" value="NC_007005.1"/>
</dbReference>
<dbReference type="SMR" id="Q4ZVN1"/>
<dbReference type="STRING" id="205918.Psyr_1743"/>
<dbReference type="KEGG" id="psb:Psyr_1743"/>
<dbReference type="PATRIC" id="fig|205918.7.peg.1782"/>
<dbReference type="eggNOG" id="COG0190">
    <property type="taxonomic scope" value="Bacteria"/>
</dbReference>
<dbReference type="HOGENOM" id="CLU_034045_2_1_6"/>
<dbReference type="OrthoDB" id="9803580at2"/>
<dbReference type="UniPathway" id="UPA00193"/>
<dbReference type="Proteomes" id="UP000000426">
    <property type="component" value="Chromosome"/>
</dbReference>
<dbReference type="GO" id="GO:0005829">
    <property type="term" value="C:cytosol"/>
    <property type="evidence" value="ECO:0007669"/>
    <property type="project" value="TreeGrafter"/>
</dbReference>
<dbReference type="GO" id="GO:0004477">
    <property type="term" value="F:methenyltetrahydrofolate cyclohydrolase activity"/>
    <property type="evidence" value="ECO:0007669"/>
    <property type="project" value="UniProtKB-UniRule"/>
</dbReference>
<dbReference type="GO" id="GO:0004488">
    <property type="term" value="F:methylenetetrahydrofolate dehydrogenase (NADP+) activity"/>
    <property type="evidence" value="ECO:0007669"/>
    <property type="project" value="UniProtKB-UniRule"/>
</dbReference>
<dbReference type="GO" id="GO:0000105">
    <property type="term" value="P:L-histidine biosynthetic process"/>
    <property type="evidence" value="ECO:0007669"/>
    <property type="project" value="UniProtKB-KW"/>
</dbReference>
<dbReference type="GO" id="GO:0009086">
    <property type="term" value="P:methionine biosynthetic process"/>
    <property type="evidence" value="ECO:0007669"/>
    <property type="project" value="UniProtKB-KW"/>
</dbReference>
<dbReference type="GO" id="GO:0006164">
    <property type="term" value="P:purine nucleotide biosynthetic process"/>
    <property type="evidence" value="ECO:0007669"/>
    <property type="project" value="UniProtKB-KW"/>
</dbReference>
<dbReference type="GO" id="GO:0035999">
    <property type="term" value="P:tetrahydrofolate interconversion"/>
    <property type="evidence" value="ECO:0007669"/>
    <property type="project" value="UniProtKB-UniRule"/>
</dbReference>
<dbReference type="CDD" id="cd01080">
    <property type="entry name" value="NAD_bind_m-THF_DH_Cyclohyd"/>
    <property type="match status" value="1"/>
</dbReference>
<dbReference type="FunFam" id="3.40.50.10860:FF:000001">
    <property type="entry name" value="Bifunctional protein FolD"/>
    <property type="match status" value="1"/>
</dbReference>
<dbReference type="FunFam" id="3.40.50.720:FF:000006">
    <property type="entry name" value="Bifunctional protein FolD"/>
    <property type="match status" value="1"/>
</dbReference>
<dbReference type="Gene3D" id="3.40.50.10860">
    <property type="entry name" value="Leucine Dehydrogenase, chain A, domain 1"/>
    <property type="match status" value="1"/>
</dbReference>
<dbReference type="Gene3D" id="3.40.50.720">
    <property type="entry name" value="NAD(P)-binding Rossmann-like Domain"/>
    <property type="match status" value="1"/>
</dbReference>
<dbReference type="HAMAP" id="MF_01576">
    <property type="entry name" value="THF_DHG_CYH"/>
    <property type="match status" value="1"/>
</dbReference>
<dbReference type="InterPro" id="IPR046346">
    <property type="entry name" value="Aminoacid_DH-like_N_sf"/>
</dbReference>
<dbReference type="InterPro" id="IPR036291">
    <property type="entry name" value="NAD(P)-bd_dom_sf"/>
</dbReference>
<dbReference type="InterPro" id="IPR000672">
    <property type="entry name" value="THF_DH/CycHdrlase"/>
</dbReference>
<dbReference type="InterPro" id="IPR020630">
    <property type="entry name" value="THF_DH/CycHdrlase_cat_dom"/>
</dbReference>
<dbReference type="InterPro" id="IPR020631">
    <property type="entry name" value="THF_DH/CycHdrlase_NAD-bd_dom"/>
</dbReference>
<dbReference type="NCBIfam" id="NF008058">
    <property type="entry name" value="PRK10792.1"/>
    <property type="match status" value="1"/>
</dbReference>
<dbReference type="NCBIfam" id="NF010783">
    <property type="entry name" value="PRK14186.1"/>
    <property type="match status" value="1"/>
</dbReference>
<dbReference type="PANTHER" id="PTHR48099:SF5">
    <property type="entry name" value="C-1-TETRAHYDROFOLATE SYNTHASE, CYTOPLASMIC"/>
    <property type="match status" value="1"/>
</dbReference>
<dbReference type="PANTHER" id="PTHR48099">
    <property type="entry name" value="C-1-TETRAHYDROFOLATE SYNTHASE, CYTOPLASMIC-RELATED"/>
    <property type="match status" value="1"/>
</dbReference>
<dbReference type="Pfam" id="PF00763">
    <property type="entry name" value="THF_DHG_CYH"/>
    <property type="match status" value="1"/>
</dbReference>
<dbReference type="Pfam" id="PF02882">
    <property type="entry name" value="THF_DHG_CYH_C"/>
    <property type="match status" value="1"/>
</dbReference>
<dbReference type="PRINTS" id="PR00085">
    <property type="entry name" value="THFDHDRGNASE"/>
</dbReference>
<dbReference type="SUPFAM" id="SSF53223">
    <property type="entry name" value="Aminoacid dehydrogenase-like, N-terminal domain"/>
    <property type="match status" value="1"/>
</dbReference>
<dbReference type="SUPFAM" id="SSF51735">
    <property type="entry name" value="NAD(P)-binding Rossmann-fold domains"/>
    <property type="match status" value="1"/>
</dbReference>
<feature type="chain" id="PRO_0000268450" description="Bifunctional protein FolD 1">
    <location>
        <begin position="1"/>
        <end position="284"/>
    </location>
</feature>
<feature type="binding site" evidence="1">
    <location>
        <begin position="166"/>
        <end position="168"/>
    </location>
    <ligand>
        <name>NADP(+)</name>
        <dbReference type="ChEBI" id="CHEBI:58349"/>
    </ligand>
</feature>
<feature type="binding site" evidence="1">
    <location>
        <position position="232"/>
    </location>
    <ligand>
        <name>NADP(+)</name>
        <dbReference type="ChEBI" id="CHEBI:58349"/>
    </ligand>
</feature>
<organism>
    <name type="scientific">Pseudomonas syringae pv. syringae (strain B728a)</name>
    <dbReference type="NCBI Taxonomy" id="205918"/>
    <lineage>
        <taxon>Bacteria</taxon>
        <taxon>Pseudomonadati</taxon>
        <taxon>Pseudomonadota</taxon>
        <taxon>Gammaproteobacteria</taxon>
        <taxon>Pseudomonadales</taxon>
        <taxon>Pseudomonadaceae</taxon>
        <taxon>Pseudomonas</taxon>
        <taxon>Pseudomonas syringae</taxon>
    </lineage>
</organism>
<accession>Q4ZVN1</accession>